<dbReference type="EC" id="3.1.1.29" evidence="1"/>
<dbReference type="EMBL" id="CP000970">
    <property type="protein sequence ID" value="ACB17369.1"/>
    <property type="molecule type" value="Genomic_DNA"/>
</dbReference>
<dbReference type="RefSeq" id="WP_000152933.1">
    <property type="nucleotide sequence ID" value="NC_010498.1"/>
</dbReference>
<dbReference type="BMRB" id="B1LH96"/>
<dbReference type="SMR" id="B1LH96"/>
<dbReference type="GeneID" id="93775269"/>
<dbReference type="KEGG" id="ecm:EcSMS35_1938"/>
<dbReference type="HOGENOM" id="CLU_062456_3_1_6"/>
<dbReference type="Proteomes" id="UP000007011">
    <property type="component" value="Chromosome"/>
</dbReference>
<dbReference type="GO" id="GO:0005737">
    <property type="term" value="C:cytoplasm"/>
    <property type="evidence" value="ECO:0007669"/>
    <property type="project" value="UniProtKB-SubCell"/>
</dbReference>
<dbReference type="GO" id="GO:0004045">
    <property type="term" value="F:peptidyl-tRNA hydrolase activity"/>
    <property type="evidence" value="ECO:0007669"/>
    <property type="project" value="UniProtKB-UniRule"/>
</dbReference>
<dbReference type="GO" id="GO:0000049">
    <property type="term" value="F:tRNA binding"/>
    <property type="evidence" value="ECO:0007669"/>
    <property type="project" value="UniProtKB-UniRule"/>
</dbReference>
<dbReference type="GO" id="GO:0006515">
    <property type="term" value="P:protein quality control for misfolded or incompletely synthesized proteins"/>
    <property type="evidence" value="ECO:0007669"/>
    <property type="project" value="UniProtKB-UniRule"/>
</dbReference>
<dbReference type="GO" id="GO:0072344">
    <property type="term" value="P:rescue of stalled ribosome"/>
    <property type="evidence" value="ECO:0007669"/>
    <property type="project" value="UniProtKB-UniRule"/>
</dbReference>
<dbReference type="CDD" id="cd00462">
    <property type="entry name" value="PTH"/>
    <property type="match status" value="1"/>
</dbReference>
<dbReference type="FunFam" id="3.40.50.1470:FF:000001">
    <property type="entry name" value="Peptidyl-tRNA hydrolase"/>
    <property type="match status" value="1"/>
</dbReference>
<dbReference type="Gene3D" id="3.40.50.1470">
    <property type="entry name" value="Peptidyl-tRNA hydrolase"/>
    <property type="match status" value="1"/>
</dbReference>
<dbReference type="HAMAP" id="MF_00083">
    <property type="entry name" value="Pept_tRNA_hydro_bact"/>
    <property type="match status" value="1"/>
</dbReference>
<dbReference type="InterPro" id="IPR001328">
    <property type="entry name" value="Pept_tRNA_hydro"/>
</dbReference>
<dbReference type="InterPro" id="IPR018171">
    <property type="entry name" value="Pept_tRNA_hydro_CS"/>
</dbReference>
<dbReference type="InterPro" id="IPR036416">
    <property type="entry name" value="Pept_tRNA_hydro_sf"/>
</dbReference>
<dbReference type="NCBIfam" id="TIGR00447">
    <property type="entry name" value="pth"/>
    <property type="match status" value="1"/>
</dbReference>
<dbReference type="PANTHER" id="PTHR17224">
    <property type="entry name" value="PEPTIDYL-TRNA HYDROLASE"/>
    <property type="match status" value="1"/>
</dbReference>
<dbReference type="PANTHER" id="PTHR17224:SF1">
    <property type="entry name" value="PEPTIDYL-TRNA HYDROLASE"/>
    <property type="match status" value="1"/>
</dbReference>
<dbReference type="Pfam" id="PF01195">
    <property type="entry name" value="Pept_tRNA_hydro"/>
    <property type="match status" value="1"/>
</dbReference>
<dbReference type="SUPFAM" id="SSF53178">
    <property type="entry name" value="Peptidyl-tRNA hydrolase-like"/>
    <property type="match status" value="1"/>
</dbReference>
<dbReference type="PROSITE" id="PS01195">
    <property type="entry name" value="PEPT_TRNA_HYDROL_1"/>
    <property type="match status" value="1"/>
</dbReference>
<dbReference type="PROSITE" id="PS01196">
    <property type="entry name" value="PEPT_TRNA_HYDROL_2"/>
    <property type="match status" value="1"/>
</dbReference>
<name>PTH_ECOSM</name>
<reference key="1">
    <citation type="journal article" date="2008" name="J. Bacteriol.">
        <title>Insights into the environmental resistance gene pool from the genome sequence of the multidrug-resistant environmental isolate Escherichia coli SMS-3-5.</title>
        <authorList>
            <person name="Fricke W.F."/>
            <person name="Wright M.S."/>
            <person name="Lindell A.H."/>
            <person name="Harkins D.M."/>
            <person name="Baker-Austin C."/>
            <person name="Ravel J."/>
            <person name="Stepanauskas R."/>
        </authorList>
    </citation>
    <scope>NUCLEOTIDE SEQUENCE [LARGE SCALE GENOMIC DNA]</scope>
    <source>
        <strain>SMS-3-5 / SECEC</strain>
    </source>
</reference>
<protein>
    <recommendedName>
        <fullName evidence="1">Peptidyl-tRNA hydrolase</fullName>
        <shortName evidence="1">Pth</shortName>
        <ecNumber evidence="1">3.1.1.29</ecNumber>
    </recommendedName>
</protein>
<gene>
    <name evidence="1" type="primary">pth</name>
    <name type="ordered locus">EcSMS35_1938</name>
</gene>
<keyword id="KW-0963">Cytoplasm</keyword>
<keyword id="KW-0378">Hydrolase</keyword>
<keyword id="KW-0694">RNA-binding</keyword>
<keyword id="KW-0820">tRNA-binding</keyword>
<organism>
    <name type="scientific">Escherichia coli (strain SMS-3-5 / SECEC)</name>
    <dbReference type="NCBI Taxonomy" id="439855"/>
    <lineage>
        <taxon>Bacteria</taxon>
        <taxon>Pseudomonadati</taxon>
        <taxon>Pseudomonadota</taxon>
        <taxon>Gammaproteobacteria</taxon>
        <taxon>Enterobacterales</taxon>
        <taxon>Enterobacteriaceae</taxon>
        <taxon>Escherichia</taxon>
    </lineage>
</organism>
<sequence>MTIKLIVGLANPGAEYAATRHNAGAWFVDLLAERLRAPLREEAKFFGYTSRVTLGGEDVRLLVPTTFMNLSGKAVAAMASFFRINPDEILVAHDELDLPPGVAKFKLGGGHGGHNGLKDIISKLGNNPNFHRLRIGIGHPGDKNKVVGFVLGKPPVSEQKLIDEAIDEAARCTEMWFTDGLTKATNRLHAFKAQ</sequence>
<proteinExistence type="inferred from homology"/>
<feature type="chain" id="PRO_1000192966" description="Peptidyl-tRNA hydrolase">
    <location>
        <begin position="1"/>
        <end position="194"/>
    </location>
</feature>
<feature type="active site" description="Proton acceptor" evidence="1">
    <location>
        <position position="21"/>
    </location>
</feature>
<feature type="binding site" evidence="1">
    <location>
        <position position="16"/>
    </location>
    <ligand>
        <name>tRNA</name>
        <dbReference type="ChEBI" id="CHEBI:17843"/>
    </ligand>
</feature>
<feature type="binding site" evidence="1">
    <location>
        <position position="67"/>
    </location>
    <ligand>
        <name>tRNA</name>
        <dbReference type="ChEBI" id="CHEBI:17843"/>
    </ligand>
</feature>
<feature type="binding site" evidence="1">
    <location>
        <position position="69"/>
    </location>
    <ligand>
        <name>tRNA</name>
        <dbReference type="ChEBI" id="CHEBI:17843"/>
    </ligand>
</feature>
<feature type="binding site" evidence="1">
    <location>
        <position position="115"/>
    </location>
    <ligand>
        <name>tRNA</name>
        <dbReference type="ChEBI" id="CHEBI:17843"/>
    </ligand>
</feature>
<feature type="site" description="Discriminates between blocked and unblocked aminoacyl-tRNA" evidence="1">
    <location>
        <position position="11"/>
    </location>
</feature>
<feature type="site" description="Stabilizes the basic form of H active site to accept a proton" evidence="1">
    <location>
        <position position="94"/>
    </location>
</feature>
<comment type="function">
    <text evidence="1">Hydrolyzes ribosome-free peptidyl-tRNAs (with 1 or more amino acids incorporated), which drop off the ribosome during protein synthesis, or as a result of ribosome stalling.</text>
</comment>
<comment type="function">
    <text evidence="1">Catalyzes the release of premature peptidyl moieties from peptidyl-tRNA molecules trapped in stalled 50S ribosomal subunits, and thus maintains levels of free tRNAs and 50S ribosomes.</text>
</comment>
<comment type="catalytic activity">
    <reaction evidence="1">
        <text>an N-acyl-L-alpha-aminoacyl-tRNA + H2O = an N-acyl-L-amino acid + a tRNA + H(+)</text>
        <dbReference type="Rhea" id="RHEA:54448"/>
        <dbReference type="Rhea" id="RHEA-COMP:10123"/>
        <dbReference type="Rhea" id="RHEA-COMP:13883"/>
        <dbReference type="ChEBI" id="CHEBI:15377"/>
        <dbReference type="ChEBI" id="CHEBI:15378"/>
        <dbReference type="ChEBI" id="CHEBI:59874"/>
        <dbReference type="ChEBI" id="CHEBI:78442"/>
        <dbReference type="ChEBI" id="CHEBI:138191"/>
        <dbReference type="EC" id="3.1.1.29"/>
    </reaction>
</comment>
<comment type="subunit">
    <text evidence="1">Monomer.</text>
</comment>
<comment type="subcellular location">
    <subcellularLocation>
        <location evidence="1">Cytoplasm</location>
    </subcellularLocation>
</comment>
<comment type="similarity">
    <text evidence="1">Belongs to the PTH family.</text>
</comment>
<evidence type="ECO:0000255" key="1">
    <source>
        <dbReference type="HAMAP-Rule" id="MF_00083"/>
    </source>
</evidence>
<accession>B1LH96</accession>